<gene>
    <name evidence="1" type="primary">hemF</name>
    <name type="ordered locus">SeD_A2817</name>
</gene>
<reference key="1">
    <citation type="journal article" date="2011" name="J. Bacteriol.">
        <title>Comparative genomics of 28 Salmonella enterica isolates: evidence for CRISPR-mediated adaptive sublineage evolution.</title>
        <authorList>
            <person name="Fricke W.F."/>
            <person name="Mammel M.K."/>
            <person name="McDermott P.F."/>
            <person name="Tartera C."/>
            <person name="White D.G."/>
            <person name="Leclerc J.E."/>
            <person name="Ravel J."/>
            <person name="Cebula T.A."/>
        </authorList>
    </citation>
    <scope>NUCLEOTIDE SEQUENCE [LARGE SCALE GENOMIC DNA]</scope>
    <source>
        <strain>CT_02021853</strain>
    </source>
</reference>
<protein>
    <recommendedName>
        <fullName evidence="1">Oxygen-dependent coproporphyrinogen-III oxidase</fullName>
        <shortName evidence="1">CPO</shortName>
        <shortName evidence="1">Coprogen oxidase</shortName>
        <shortName evidence="1">Coproporphyrinogenase</shortName>
        <ecNumber evidence="1">1.3.3.3</ecNumber>
    </recommendedName>
</protein>
<accession>B5FQE4</accession>
<evidence type="ECO:0000255" key="1">
    <source>
        <dbReference type="HAMAP-Rule" id="MF_00333"/>
    </source>
</evidence>
<dbReference type="EC" id="1.3.3.3" evidence="1"/>
<dbReference type="EMBL" id="CP001144">
    <property type="protein sequence ID" value="ACH74113.1"/>
    <property type="molecule type" value="Genomic_DNA"/>
</dbReference>
<dbReference type="RefSeq" id="WP_000801326.1">
    <property type="nucleotide sequence ID" value="NC_011205.1"/>
</dbReference>
<dbReference type="SMR" id="B5FQE4"/>
<dbReference type="KEGG" id="sed:SeD_A2817"/>
<dbReference type="HOGENOM" id="CLU_026169_0_1_6"/>
<dbReference type="UniPathway" id="UPA00251">
    <property type="reaction ID" value="UER00322"/>
</dbReference>
<dbReference type="Proteomes" id="UP000008322">
    <property type="component" value="Chromosome"/>
</dbReference>
<dbReference type="GO" id="GO:0005737">
    <property type="term" value="C:cytoplasm"/>
    <property type="evidence" value="ECO:0007669"/>
    <property type="project" value="UniProtKB-SubCell"/>
</dbReference>
<dbReference type="GO" id="GO:0004109">
    <property type="term" value="F:coproporphyrinogen oxidase activity"/>
    <property type="evidence" value="ECO:0007669"/>
    <property type="project" value="UniProtKB-UniRule"/>
</dbReference>
<dbReference type="GO" id="GO:0046872">
    <property type="term" value="F:metal ion binding"/>
    <property type="evidence" value="ECO:0007669"/>
    <property type="project" value="UniProtKB-KW"/>
</dbReference>
<dbReference type="GO" id="GO:0042803">
    <property type="term" value="F:protein homodimerization activity"/>
    <property type="evidence" value="ECO:0000250"/>
    <property type="project" value="UniProtKB"/>
</dbReference>
<dbReference type="GO" id="GO:0006782">
    <property type="term" value="P:protoporphyrinogen IX biosynthetic process"/>
    <property type="evidence" value="ECO:0007669"/>
    <property type="project" value="UniProtKB-UniRule"/>
</dbReference>
<dbReference type="FunFam" id="3.40.1500.10:FF:000001">
    <property type="entry name" value="Oxygen-dependent coproporphyrinogen-III oxidase"/>
    <property type="match status" value="1"/>
</dbReference>
<dbReference type="Gene3D" id="3.40.1500.10">
    <property type="entry name" value="Coproporphyrinogen III oxidase, aerobic"/>
    <property type="match status" value="1"/>
</dbReference>
<dbReference type="HAMAP" id="MF_00333">
    <property type="entry name" value="Coprogen_oxidas"/>
    <property type="match status" value="1"/>
</dbReference>
<dbReference type="InterPro" id="IPR001260">
    <property type="entry name" value="Coprogen_oxidase_aer"/>
</dbReference>
<dbReference type="InterPro" id="IPR036406">
    <property type="entry name" value="Coprogen_oxidase_aer_sf"/>
</dbReference>
<dbReference type="InterPro" id="IPR018375">
    <property type="entry name" value="Coprogen_oxidase_CS"/>
</dbReference>
<dbReference type="NCBIfam" id="NF003727">
    <property type="entry name" value="PRK05330.1"/>
    <property type="match status" value="1"/>
</dbReference>
<dbReference type="PANTHER" id="PTHR10755">
    <property type="entry name" value="COPROPORPHYRINOGEN III OXIDASE, MITOCHONDRIAL"/>
    <property type="match status" value="1"/>
</dbReference>
<dbReference type="PANTHER" id="PTHR10755:SF0">
    <property type="entry name" value="OXYGEN-DEPENDENT COPROPORPHYRINOGEN-III OXIDASE, MITOCHONDRIAL"/>
    <property type="match status" value="1"/>
</dbReference>
<dbReference type="Pfam" id="PF01218">
    <property type="entry name" value="Coprogen_oxidas"/>
    <property type="match status" value="1"/>
</dbReference>
<dbReference type="PIRSF" id="PIRSF000166">
    <property type="entry name" value="Coproporphyri_ox"/>
    <property type="match status" value="1"/>
</dbReference>
<dbReference type="PRINTS" id="PR00073">
    <property type="entry name" value="COPRGNOXDASE"/>
</dbReference>
<dbReference type="SUPFAM" id="SSF102886">
    <property type="entry name" value="Coproporphyrinogen III oxidase"/>
    <property type="match status" value="1"/>
</dbReference>
<dbReference type="PROSITE" id="PS01021">
    <property type="entry name" value="COPROGEN_OXIDASE"/>
    <property type="match status" value="1"/>
</dbReference>
<comment type="function">
    <text evidence="1">Involved in the heme biosynthesis. Catalyzes the aerobic oxidative decarboxylation of propionate groups of rings A and B of coproporphyrinogen-III to yield the vinyl groups in protoporphyrinogen-IX.</text>
</comment>
<comment type="catalytic activity">
    <reaction evidence="1">
        <text>coproporphyrinogen III + O2 + 2 H(+) = protoporphyrinogen IX + 2 CO2 + 2 H2O</text>
        <dbReference type="Rhea" id="RHEA:18257"/>
        <dbReference type="ChEBI" id="CHEBI:15377"/>
        <dbReference type="ChEBI" id="CHEBI:15378"/>
        <dbReference type="ChEBI" id="CHEBI:15379"/>
        <dbReference type="ChEBI" id="CHEBI:16526"/>
        <dbReference type="ChEBI" id="CHEBI:57307"/>
        <dbReference type="ChEBI" id="CHEBI:57309"/>
        <dbReference type="EC" id="1.3.3.3"/>
    </reaction>
</comment>
<comment type="cofactor">
    <cofactor evidence="1">
        <name>a divalent metal cation</name>
        <dbReference type="ChEBI" id="CHEBI:60240"/>
    </cofactor>
</comment>
<comment type="pathway">
    <text evidence="1">Porphyrin-containing compound metabolism; protoporphyrin-IX biosynthesis; protoporphyrinogen-IX from coproporphyrinogen-III (O2 route): step 1/1.</text>
</comment>
<comment type="subunit">
    <text evidence="1">Homodimer.</text>
</comment>
<comment type="subcellular location">
    <subcellularLocation>
        <location evidence="1">Cytoplasm</location>
    </subcellularLocation>
</comment>
<comment type="similarity">
    <text evidence="1">Belongs to the aerobic coproporphyrinogen-III oxidase family.</text>
</comment>
<organism>
    <name type="scientific">Salmonella dublin (strain CT_02021853)</name>
    <dbReference type="NCBI Taxonomy" id="439851"/>
    <lineage>
        <taxon>Bacteria</taxon>
        <taxon>Pseudomonadati</taxon>
        <taxon>Pseudomonadota</taxon>
        <taxon>Gammaproteobacteria</taxon>
        <taxon>Enterobacterales</taxon>
        <taxon>Enterobacteriaceae</taxon>
        <taxon>Salmonella</taxon>
    </lineage>
</organism>
<name>HEM6_SALDC</name>
<sequence>MKPDAHHVKQFLLRLQDDICQKLSAVDGANFVEDSWRREAGGGGRSRVLRNGGIFEQAGVNFSHVHGDAMPASATAHRPELAGRSFEAMGVSLVVHPHNPYIPTSHANVRFFIAEKPGADPVWWFGGGFDLTPYYGFEEDAVHWHRTARDLCQPFGDDVYPRYKKWCDDYFFLKHRNEQRGIGGLFFDDLNTPDFDHCFAFMQAVGNGYTEAYLPIVERRKAMVWGERERNFQLYRRGRYVEFNLVWDRGTLFGLQTGGRTESILMSMPPLVRWEYDWQPEAGSPEAALSEFIQVRDWI</sequence>
<keyword id="KW-0963">Cytoplasm</keyword>
<keyword id="KW-0350">Heme biosynthesis</keyword>
<keyword id="KW-0479">Metal-binding</keyword>
<keyword id="KW-0560">Oxidoreductase</keyword>
<keyword id="KW-0627">Porphyrin biosynthesis</keyword>
<proteinExistence type="inferred from homology"/>
<feature type="chain" id="PRO_1000119819" description="Oxygen-dependent coproporphyrinogen-III oxidase">
    <location>
        <begin position="1"/>
        <end position="299"/>
    </location>
</feature>
<feature type="region of interest" description="Important for dimerization" evidence="1">
    <location>
        <begin position="240"/>
        <end position="275"/>
    </location>
</feature>
<feature type="active site" description="Proton donor" evidence="1">
    <location>
        <position position="106"/>
    </location>
</feature>
<feature type="binding site" evidence="1">
    <location>
        <position position="92"/>
    </location>
    <ligand>
        <name>substrate</name>
    </ligand>
</feature>
<feature type="binding site" evidence="1">
    <location>
        <position position="96"/>
    </location>
    <ligand>
        <name>a divalent metal cation</name>
        <dbReference type="ChEBI" id="CHEBI:60240"/>
    </ligand>
</feature>
<feature type="binding site" evidence="1">
    <location>
        <position position="106"/>
    </location>
    <ligand>
        <name>a divalent metal cation</name>
        <dbReference type="ChEBI" id="CHEBI:60240"/>
    </ligand>
</feature>
<feature type="binding site" evidence="1">
    <location>
        <begin position="108"/>
        <end position="110"/>
    </location>
    <ligand>
        <name>substrate</name>
    </ligand>
</feature>
<feature type="binding site" evidence="1">
    <location>
        <position position="145"/>
    </location>
    <ligand>
        <name>a divalent metal cation</name>
        <dbReference type="ChEBI" id="CHEBI:60240"/>
    </ligand>
</feature>
<feature type="binding site" evidence="1">
    <location>
        <position position="175"/>
    </location>
    <ligand>
        <name>a divalent metal cation</name>
        <dbReference type="ChEBI" id="CHEBI:60240"/>
    </ligand>
</feature>
<feature type="binding site" evidence="1">
    <location>
        <begin position="258"/>
        <end position="260"/>
    </location>
    <ligand>
        <name>substrate</name>
    </ligand>
</feature>
<feature type="site" description="Important for dimerization" evidence="1">
    <location>
        <position position="175"/>
    </location>
</feature>